<name>Y497_CHLPN</name>
<evidence type="ECO:0000255" key="1">
    <source>
        <dbReference type="HAMAP-Rule" id="MF_00634"/>
    </source>
</evidence>
<sequence>MDDSWILEVKVTPKAKENKIVGFDGQALKVRVTEPPEKGKANDAVISLLAKALSLPKRDVTLIAGETSRKKKFLLPNRVQDIIFSLHIDV</sequence>
<accession>Q9Z854</accession>
<gene>
    <name type="ordered locus">CPn_0497</name>
    <name type="ordered locus">CP_0257</name>
    <name type="ordered locus">CPj0497</name>
    <name type="ordered locus">CpB0517</name>
</gene>
<feature type="chain" id="PRO_0000139438" description="UPF0235 protein CPn_0497/CP_0257/CPj0497/CpB0517">
    <location>
        <begin position="1"/>
        <end position="90"/>
    </location>
</feature>
<proteinExistence type="inferred from homology"/>
<protein>
    <recommendedName>
        <fullName evidence="1">UPF0235 protein CPn_0497/CP_0257/CPj0497/CpB0517</fullName>
    </recommendedName>
</protein>
<organism>
    <name type="scientific">Chlamydia pneumoniae</name>
    <name type="common">Chlamydophila pneumoniae</name>
    <dbReference type="NCBI Taxonomy" id="83558"/>
    <lineage>
        <taxon>Bacteria</taxon>
        <taxon>Pseudomonadati</taxon>
        <taxon>Chlamydiota</taxon>
        <taxon>Chlamydiia</taxon>
        <taxon>Chlamydiales</taxon>
        <taxon>Chlamydiaceae</taxon>
        <taxon>Chlamydia/Chlamydophila group</taxon>
        <taxon>Chlamydia</taxon>
    </lineage>
</organism>
<reference key="1">
    <citation type="journal article" date="1999" name="Nat. Genet.">
        <title>Comparative genomes of Chlamydia pneumoniae and C. trachomatis.</title>
        <authorList>
            <person name="Kalman S."/>
            <person name="Mitchell W.P."/>
            <person name="Marathe R."/>
            <person name="Lammel C.J."/>
            <person name="Fan J."/>
            <person name="Hyman R.W."/>
            <person name="Olinger L."/>
            <person name="Grimwood J."/>
            <person name="Davis R.W."/>
            <person name="Stephens R.S."/>
        </authorList>
    </citation>
    <scope>NUCLEOTIDE SEQUENCE [LARGE SCALE GENOMIC DNA]</scope>
    <source>
        <strain>CWL029</strain>
    </source>
</reference>
<reference key="2">
    <citation type="journal article" date="2000" name="Nucleic Acids Res.">
        <title>Genome sequences of Chlamydia trachomatis MoPn and Chlamydia pneumoniae AR39.</title>
        <authorList>
            <person name="Read T.D."/>
            <person name="Brunham R.C."/>
            <person name="Shen C."/>
            <person name="Gill S.R."/>
            <person name="Heidelberg J.F."/>
            <person name="White O."/>
            <person name="Hickey E.K."/>
            <person name="Peterson J.D."/>
            <person name="Utterback T.R."/>
            <person name="Berry K.J."/>
            <person name="Bass S."/>
            <person name="Linher K.D."/>
            <person name="Weidman J.F."/>
            <person name="Khouri H.M."/>
            <person name="Craven B."/>
            <person name="Bowman C."/>
            <person name="Dodson R.J."/>
            <person name="Gwinn M.L."/>
            <person name="Nelson W.C."/>
            <person name="DeBoy R.T."/>
            <person name="Kolonay J.F."/>
            <person name="McClarty G."/>
            <person name="Salzberg S.L."/>
            <person name="Eisen J.A."/>
            <person name="Fraser C.M."/>
        </authorList>
    </citation>
    <scope>NUCLEOTIDE SEQUENCE [LARGE SCALE GENOMIC DNA]</scope>
    <source>
        <strain>AR39</strain>
    </source>
</reference>
<reference key="3">
    <citation type="journal article" date="2000" name="Nucleic Acids Res.">
        <title>Comparison of whole genome sequences of Chlamydia pneumoniae J138 from Japan and CWL029 from USA.</title>
        <authorList>
            <person name="Shirai M."/>
            <person name="Hirakawa H."/>
            <person name="Kimoto M."/>
            <person name="Tabuchi M."/>
            <person name="Kishi F."/>
            <person name="Ouchi K."/>
            <person name="Shiba T."/>
            <person name="Ishii K."/>
            <person name="Hattori M."/>
            <person name="Kuhara S."/>
            <person name="Nakazawa T."/>
        </authorList>
    </citation>
    <scope>NUCLEOTIDE SEQUENCE [LARGE SCALE GENOMIC DNA]</scope>
    <source>
        <strain>J138</strain>
    </source>
</reference>
<reference key="4">
    <citation type="submission" date="2002-05" db="EMBL/GenBank/DDBJ databases">
        <title>The genome sequence of Chlamydia pneumoniae TW183 and comparison with other Chlamydia strains based on whole genome sequence analysis.</title>
        <authorList>
            <person name="Geng M.M."/>
            <person name="Schuhmacher A."/>
            <person name="Muehldorfer I."/>
            <person name="Bensch K.W."/>
            <person name="Schaefer K.P."/>
            <person name="Schneider S."/>
            <person name="Pohl T."/>
            <person name="Essig A."/>
            <person name="Marre R."/>
            <person name="Melchers K."/>
        </authorList>
    </citation>
    <scope>NUCLEOTIDE SEQUENCE [LARGE SCALE GENOMIC DNA]</scope>
    <source>
        <strain>TW-183</strain>
    </source>
</reference>
<dbReference type="EMBL" id="AE001363">
    <property type="protein sequence ID" value="AAD18637.1"/>
    <property type="molecule type" value="Genomic_DNA"/>
</dbReference>
<dbReference type="EMBL" id="AE002161">
    <property type="protein sequence ID" value="AAF38120.1"/>
    <property type="molecule type" value="Genomic_DNA"/>
</dbReference>
<dbReference type="EMBL" id="BA000008">
    <property type="protein sequence ID" value="BAA98703.1"/>
    <property type="molecule type" value="Genomic_DNA"/>
</dbReference>
<dbReference type="EMBL" id="AE009440">
    <property type="protein sequence ID" value="AAP98446.1"/>
    <property type="molecule type" value="Genomic_DNA"/>
</dbReference>
<dbReference type="PIR" id="E86552">
    <property type="entry name" value="E86552"/>
</dbReference>
<dbReference type="PIR" id="H72072">
    <property type="entry name" value="H72072"/>
</dbReference>
<dbReference type="RefSeq" id="NP_224693.1">
    <property type="nucleotide sequence ID" value="NC_000922.1"/>
</dbReference>
<dbReference type="RefSeq" id="WP_010883135.1">
    <property type="nucleotide sequence ID" value="NZ_LN847257.1"/>
</dbReference>
<dbReference type="SMR" id="Q9Z854"/>
<dbReference type="STRING" id="406984.CPK_ORF01013"/>
<dbReference type="GeneID" id="45050540"/>
<dbReference type="KEGG" id="cpa:CP_0257"/>
<dbReference type="KEGG" id="cpj:CPj0497"/>
<dbReference type="KEGG" id="cpn:CPn_0497"/>
<dbReference type="KEGG" id="cpt:CpB0517"/>
<dbReference type="PATRIC" id="fig|115713.3.peg.556"/>
<dbReference type="eggNOG" id="COG1872">
    <property type="taxonomic scope" value="Bacteria"/>
</dbReference>
<dbReference type="HOGENOM" id="CLU_130694_6_2_0"/>
<dbReference type="OMA" id="AANKQCV"/>
<dbReference type="OrthoDB" id="9800587at2"/>
<dbReference type="Proteomes" id="UP000000583">
    <property type="component" value="Chromosome"/>
</dbReference>
<dbReference type="Proteomes" id="UP000000801">
    <property type="component" value="Chromosome"/>
</dbReference>
<dbReference type="GO" id="GO:0005737">
    <property type="term" value="C:cytoplasm"/>
    <property type="evidence" value="ECO:0007669"/>
    <property type="project" value="TreeGrafter"/>
</dbReference>
<dbReference type="Gene3D" id="3.30.1200.10">
    <property type="entry name" value="YggU-like"/>
    <property type="match status" value="1"/>
</dbReference>
<dbReference type="HAMAP" id="MF_00634">
    <property type="entry name" value="UPF0235"/>
    <property type="match status" value="1"/>
</dbReference>
<dbReference type="InterPro" id="IPR003746">
    <property type="entry name" value="DUF167"/>
</dbReference>
<dbReference type="InterPro" id="IPR036591">
    <property type="entry name" value="YggU-like_sf"/>
</dbReference>
<dbReference type="NCBIfam" id="TIGR00251">
    <property type="entry name" value="DUF167 family protein"/>
    <property type="match status" value="1"/>
</dbReference>
<dbReference type="NCBIfam" id="NF001887">
    <property type="entry name" value="PRK00647.1"/>
    <property type="match status" value="1"/>
</dbReference>
<dbReference type="PANTHER" id="PTHR13420">
    <property type="entry name" value="UPF0235 PROTEIN C15ORF40"/>
    <property type="match status" value="1"/>
</dbReference>
<dbReference type="PANTHER" id="PTHR13420:SF7">
    <property type="entry name" value="UPF0235 PROTEIN C15ORF40"/>
    <property type="match status" value="1"/>
</dbReference>
<dbReference type="Pfam" id="PF02594">
    <property type="entry name" value="DUF167"/>
    <property type="match status" value="1"/>
</dbReference>
<dbReference type="SMART" id="SM01152">
    <property type="entry name" value="DUF167"/>
    <property type="match status" value="1"/>
</dbReference>
<dbReference type="SUPFAM" id="SSF69786">
    <property type="entry name" value="YggU-like"/>
    <property type="match status" value="1"/>
</dbReference>
<comment type="similarity">
    <text evidence="1">Belongs to the UPF0235 family.</text>
</comment>